<sequence>MKKPIIEFKNVSKVFEDSNTKVLKDINFELEEGKFYTLLGASGSGKSTILNIIAGLLDATTGDIMLDGVRINDIPTNKRDVHTVFQSYALFPHMNVFENVAFPLRLRKIDKKEIEQRVAEVLKMVQLEGYEKRSIRKLSGGQRQRVAIARAIINQPRVVLLDEPLSALDLKLRTDMQYELRELQQRLGITFVFVTHDQEEALAMSDWIFVMNDGEIVQSGTPVDIYDEPINHFVATFIGESNILPGTMIEDYLVEFNGKRFEAVDGGMKPNEPVEVVIRPEDLRITLPEEGKLQVKVDTQLFRGVHYEIIAYDELGNEWMIHSTRKAIVGEEIGLDFEPEDIHIMRLNETEEEFDARIEEYVEIEEQEAGLINAIEEERDEENKL</sequence>
<keyword id="KW-0067">ATP-binding</keyword>
<keyword id="KW-1003">Cell membrane</keyword>
<keyword id="KW-0472">Membrane</keyword>
<keyword id="KW-0547">Nucleotide-binding</keyword>
<keyword id="KW-1185">Reference proteome</keyword>
<keyword id="KW-1278">Translocase</keyword>
<keyword id="KW-0813">Transport</keyword>
<feature type="chain" id="PRO_0000286304" description="Spermidine/putrescine import ATP-binding protein PotA">
    <location>
        <begin position="1"/>
        <end position="385"/>
    </location>
</feature>
<feature type="domain" description="ABC transporter" evidence="1">
    <location>
        <begin position="6"/>
        <end position="238"/>
    </location>
</feature>
<feature type="binding site" evidence="1">
    <location>
        <begin position="40"/>
        <end position="47"/>
    </location>
    <ligand>
        <name>ATP</name>
        <dbReference type="ChEBI" id="CHEBI:30616"/>
    </ligand>
</feature>
<dbReference type="EC" id="7.6.2.11" evidence="1"/>
<dbReference type="EMBL" id="CP000410">
    <property type="protein sequence ID" value="ABJ54695.1"/>
    <property type="molecule type" value="Genomic_DNA"/>
</dbReference>
<dbReference type="RefSeq" id="WP_000742913.1">
    <property type="nucleotide sequence ID" value="NZ_JAMLJR010000005.1"/>
</dbReference>
<dbReference type="SMR" id="Q04JW0"/>
<dbReference type="PaxDb" id="373153-SPD_1221"/>
<dbReference type="KEGG" id="spd:SPD_1221"/>
<dbReference type="eggNOG" id="COG3842">
    <property type="taxonomic scope" value="Bacteria"/>
</dbReference>
<dbReference type="HOGENOM" id="CLU_000604_1_1_9"/>
<dbReference type="BioCyc" id="SPNE373153:G1G6V-1321-MONOMER"/>
<dbReference type="Proteomes" id="UP000001452">
    <property type="component" value="Chromosome"/>
</dbReference>
<dbReference type="GO" id="GO:0043190">
    <property type="term" value="C:ATP-binding cassette (ABC) transporter complex"/>
    <property type="evidence" value="ECO:0007669"/>
    <property type="project" value="InterPro"/>
</dbReference>
<dbReference type="GO" id="GO:0015417">
    <property type="term" value="F:ABC-type polyamine transporter activity"/>
    <property type="evidence" value="ECO:0007669"/>
    <property type="project" value="UniProtKB-EC"/>
</dbReference>
<dbReference type="GO" id="GO:0005524">
    <property type="term" value="F:ATP binding"/>
    <property type="evidence" value="ECO:0007669"/>
    <property type="project" value="UniProtKB-KW"/>
</dbReference>
<dbReference type="GO" id="GO:0016887">
    <property type="term" value="F:ATP hydrolysis activity"/>
    <property type="evidence" value="ECO:0007669"/>
    <property type="project" value="InterPro"/>
</dbReference>
<dbReference type="FunFam" id="3.40.50.300:FF:000042">
    <property type="entry name" value="Maltose/maltodextrin ABC transporter, ATP-binding protein"/>
    <property type="match status" value="1"/>
</dbReference>
<dbReference type="Gene3D" id="2.40.50.100">
    <property type="match status" value="1"/>
</dbReference>
<dbReference type="Gene3D" id="3.40.50.300">
    <property type="entry name" value="P-loop containing nucleotide triphosphate hydrolases"/>
    <property type="match status" value="1"/>
</dbReference>
<dbReference type="InterPro" id="IPR003593">
    <property type="entry name" value="AAA+_ATPase"/>
</dbReference>
<dbReference type="InterPro" id="IPR050093">
    <property type="entry name" value="ABC_SmlMolc_Importer"/>
</dbReference>
<dbReference type="InterPro" id="IPR003439">
    <property type="entry name" value="ABC_transporter-like_ATP-bd"/>
</dbReference>
<dbReference type="InterPro" id="IPR017871">
    <property type="entry name" value="ABC_transporter-like_CS"/>
</dbReference>
<dbReference type="InterPro" id="IPR008995">
    <property type="entry name" value="Mo/tungstate-bd_C_term_dom"/>
</dbReference>
<dbReference type="InterPro" id="IPR027417">
    <property type="entry name" value="P-loop_NTPase"/>
</dbReference>
<dbReference type="InterPro" id="IPR005893">
    <property type="entry name" value="PotA-like"/>
</dbReference>
<dbReference type="InterPro" id="IPR013611">
    <property type="entry name" value="Transp-assoc_OB_typ2"/>
</dbReference>
<dbReference type="NCBIfam" id="TIGR01187">
    <property type="entry name" value="potA"/>
    <property type="match status" value="1"/>
</dbReference>
<dbReference type="PANTHER" id="PTHR42781">
    <property type="entry name" value="SPERMIDINE/PUTRESCINE IMPORT ATP-BINDING PROTEIN POTA"/>
    <property type="match status" value="1"/>
</dbReference>
<dbReference type="PANTHER" id="PTHR42781:SF4">
    <property type="entry name" value="SPERMIDINE_PUTRESCINE IMPORT ATP-BINDING PROTEIN POTA"/>
    <property type="match status" value="1"/>
</dbReference>
<dbReference type="Pfam" id="PF00005">
    <property type="entry name" value="ABC_tran"/>
    <property type="match status" value="1"/>
</dbReference>
<dbReference type="Pfam" id="PF08402">
    <property type="entry name" value="TOBE_2"/>
    <property type="match status" value="1"/>
</dbReference>
<dbReference type="SMART" id="SM00382">
    <property type="entry name" value="AAA"/>
    <property type="match status" value="1"/>
</dbReference>
<dbReference type="SUPFAM" id="SSF50331">
    <property type="entry name" value="MOP-like"/>
    <property type="match status" value="1"/>
</dbReference>
<dbReference type="SUPFAM" id="SSF52540">
    <property type="entry name" value="P-loop containing nucleoside triphosphate hydrolases"/>
    <property type="match status" value="1"/>
</dbReference>
<dbReference type="PROSITE" id="PS00211">
    <property type="entry name" value="ABC_TRANSPORTER_1"/>
    <property type="match status" value="1"/>
</dbReference>
<dbReference type="PROSITE" id="PS50893">
    <property type="entry name" value="ABC_TRANSPORTER_2"/>
    <property type="match status" value="1"/>
</dbReference>
<dbReference type="PROSITE" id="PS51305">
    <property type="entry name" value="POTA"/>
    <property type="match status" value="1"/>
</dbReference>
<organism>
    <name type="scientific">Streptococcus pneumoniae serotype 2 (strain D39 / NCTC 7466)</name>
    <dbReference type="NCBI Taxonomy" id="373153"/>
    <lineage>
        <taxon>Bacteria</taxon>
        <taxon>Bacillati</taxon>
        <taxon>Bacillota</taxon>
        <taxon>Bacilli</taxon>
        <taxon>Lactobacillales</taxon>
        <taxon>Streptococcaceae</taxon>
        <taxon>Streptococcus</taxon>
    </lineage>
</organism>
<comment type="function">
    <text evidence="1">Part of the ABC transporter complex PotABCD involved in spermidine/putrescine import. Responsible for energy coupling to the transport system.</text>
</comment>
<comment type="catalytic activity">
    <reaction evidence="1">
        <text>ATP + H2O + polyamine-[polyamine-binding protein]Side 1 = ADP + phosphate + polyamineSide 2 + [polyamine-binding protein]Side 1.</text>
        <dbReference type="EC" id="7.6.2.11"/>
    </reaction>
</comment>
<comment type="subunit">
    <text evidence="1">The complex is composed of two ATP-binding proteins (PotA), two transmembrane proteins (PotB and PotC) and a solute-binding protein (PotD).</text>
</comment>
<comment type="subcellular location">
    <subcellularLocation>
        <location evidence="1">Cell membrane</location>
        <topology evidence="1">Peripheral membrane protein</topology>
    </subcellularLocation>
</comment>
<comment type="similarity">
    <text evidence="1">Belongs to the ABC transporter superfamily. Spermidine/putrescine importer (TC 3.A.1.11.1) family.</text>
</comment>
<gene>
    <name evidence="1" type="primary">potA</name>
    <name type="ordered locus">SPD_1221</name>
</gene>
<proteinExistence type="inferred from homology"/>
<protein>
    <recommendedName>
        <fullName evidence="1">Spermidine/putrescine import ATP-binding protein PotA</fullName>
        <ecNumber evidence="1">7.6.2.11</ecNumber>
    </recommendedName>
</protein>
<reference key="1">
    <citation type="journal article" date="2007" name="J. Bacteriol.">
        <title>Genome sequence of Avery's virulent serotype 2 strain D39 of Streptococcus pneumoniae and comparison with that of unencapsulated laboratory strain R6.</title>
        <authorList>
            <person name="Lanie J.A."/>
            <person name="Ng W.-L."/>
            <person name="Kazmierczak K.M."/>
            <person name="Andrzejewski T.M."/>
            <person name="Davidsen T.M."/>
            <person name="Wayne K.J."/>
            <person name="Tettelin H."/>
            <person name="Glass J.I."/>
            <person name="Winkler M.E."/>
        </authorList>
    </citation>
    <scope>NUCLEOTIDE SEQUENCE [LARGE SCALE GENOMIC DNA]</scope>
    <source>
        <strain>D39 / NCTC 7466</strain>
    </source>
</reference>
<evidence type="ECO:0000255" key="1">
    <source>
        <dbReference type="HAMAP-Rule" id="MF_01726"/>
    </source>
</evidence>
<name>POTA_STRP2</name>
<accession>Q04JW0</accession>